<evidence type="ECO:0000305" key="1"/>
<keyword id="KW-1185">Reference proteome</keyword>
<accession>A4D1N5</accession>
<accession>Q8N7V8</accession>
<name>YG018_HUMAN</name>
<feature type="chain" id="PRO_0000326081" description="Putative uncharacterized protein FLJ40288">
    <location>
        <begin position="1"/>
        <end position="150"/>
    </location>
</feature>
<feature type="sequence conflict" description="In Ref. 1; BAC05118." evidence="1" ref="1">
    <original>K</original>
    <variation>E</variation>
    <location>
        <position position="83"/>
    </location>
</feature>
<sequence length="150" mass="16741">MSSRRSSLSPWKCPWFVYCFERPISREAGPVVHQSPTVLYLHSELAARQTQGRLLPREPAAEDLRLSLPGGHAALGLFKLQGKDSYPHPPTVLLGEDLSSSGWNSWVFGILNISRDEEAIGILTTILQLRETESSAVKWTHTKHSRELGP</sequence>
<reference key="1">
    <citation type="journal article" date="2004" name="Nat. Genet.">
        <title>Complete sequencing and characterization of 21,243 full-length human cDNAs.</title>
        <authorList>
            <person name="Ota T."/>
            <person name="Suzuki Y."/>
            <person name="Nishikawa T."/>
            <person name="Otsuki T."/>
            <person name="Sugiyama T."/>
            <person name="Irie R."/>
            <person name="Wakamatsu A."/>
            <person name="Hayashi K."/>
            <person name="Sato H."/>
            <person name="Nagai K."/>
            <person name="Kimura K."/>
            <person name="Makita H."/>
            <person name="Sekine M."/>
            <person name="Obayashi M."/>
            <person name="Nishi T."/>
            <person name="Shibahara T."/>
            <person name="Tanaka T."/>
            <person name="Ishii S."/>
            <person name="Yamamoto J."/>
            <person name="Saito K."/>
            <person name="Kawai Y."/>
            <person name="Isono Y."/>
            <person name="Nakamura Y."/>
            <person name="Nagahari K."/>
            <person name="Murakami K."/>
            <person name="Yasuda T."/>
            <person name="Iwayanagi T."/>
            <person name="Wagatsuma M."/>
            <person name="Shiratori A."/>
            <person name="Sudo H."/>
            <person name="Hosoiri T."/>
            <person name="Kaku Y."/>
            <person name="Kodaira H."/>
            <person name="Kondo H."/>
            <person name="Sugawara M."/>
            <person name="Takahashi M."/>
            <person name="Kanda K."/>
            <person name="Yokoi T."/>
            <person name="Furuya T."/>
            <person name="Kikkawa E."/>
            <person name="Omura Y."/>
            <person name="Abe K."/>
            <person name="Kamihara K."/>
            <person name="Katsuta N."/>
            <person name="Sato K."/>
            <person name="Tanikawa M."/>
            <person name="Yamazaki M."/>
            <person name="Ninomiya K."/>
            <person name="Ishibashi T."/>
            <person name="Yamashita H."/>
            <person name="Murakawa K."/>
            <person name="Fujimori K."/>
            <person name="Tanai H."/>
            <person name="Kimata M."/>
            <person name="Watanabe M."/>
            <person name="Hiraoka S."/>
            <person name="Chiba Y."/>
            <person name="Ishida S."/>
            <person name="Ono Y."/>
            <person name="Takiguchi S."/>
            <person name="Watanabe S."/>
            <person name="Yosida M."/>
            <person name="Hotuta T."/>
            <person name="Kusano J."/>
            <person name="Kanehori K."/>
            <person name="Takahashi-Fujii A."/>
            <person name="Hara H."/>
            <person name="Tanase T.-O."/>
            <person name="Nomura Y."/>
            <person name="Togiya S."/>
            <person name="Komai F."/>
            <person name="Hara R."/>
            <person name="Takeuchi K."/>
            <person name="Arita M."/>
            <person name="Imose N."/>
            <person name="Musashino K."/>
            <person name="Yuuki H."/>
            <person name="Oshima A."/>
            <person name="Sasaki N."/>
            <person name="Aotsuka S."/>
            <person name="Yoshikawa Y."/>
            <person name="Matsunawa H."/>
            <person name="Ichihara T."/>
            <person name="Shiohata N."/>
            <person name="Sano S."/>
            <person name="Moriya S."/>
            <person name="Momiyama H."/>
            <person name="Satoh N."/>
            <person name="Takami S."/>
            <person name="Terashima Y."/>
            <person name="Suzuki O."/>
            <person name="Nakagawa S."/>
            <person name="Senoh A."/>
            <person name="Mizoguchi H."/>
            <person name="Goto Y."/>
            <person name="Shimizu F."/>
            <person name="Wakebe H."/>
            <person name="Hishigaki H."/>
            <person name="Watanabe T."/>
            <person name="Sugiyama A."/>
            <person name="Takemoto M."/>
            <person name="Kawakami B."/>
            <person name="Yamazaki M."/>
            <person name="Watanabe K."/>
            <person name="Kumagai A."/>
            <person name="Itakura S."/>
            <person name="Fukuzumi Y."/>
            <person name="Fujimori Y."/>
            <person name="Komiyama M."/>
            <person name="Tashiro H."/>
            <person name="Tanigami A."/>
            <person name="Fujiwara T."/>
            <person name="Ono T."/>
            <person name="Yamada K."/>
            <person name="Fujii Y."/>
            <person name="Ozaki K."/>
            <person name="Hirao M."/>
            <person name="Ohmori Y."/>
            <person name="Kawabata A."/>
            <person name="Hikiji T."/>
            <person name="Kobatake N."/>
            <person name="Inagaki H."/>
            <person name="Ikema Y."/>
            <person name="Okamoto S."/>
            <person name="Okitani R."/>
            <person name="Kawakami T."/>
            <person name="Noguchi S."/>
            <person name="Itoh T."/>
            <person name="Shigeta K."/>
            <person name="Senba T."/>
            <person name="Matsumura K."/>
            <person name="Nakajima Y."/>
            <person name="Mizuno T."/>
            <person name="Morinaga M."/>
            <person name="Sasaki M."/>
            <person name="Togashi T."/>
            <person name="Oyama M."/>
            <person name="Hata H."/>
            <person name="Watanabe M."/>
            <person name="Komatsu T."/>
            <person name="Mizushima-Sugano J."/>
            <person name="Satoh T."/>
            <person name="Shirai Y."/>
            <person name="Takahashi Y."/>
            <person name="Nakagawa K."/>
            <person name="Okumura K."/>
            <person name="Nagase T."/>
            <person name="Nomura N."/>
            <person name="Kikuchi H."/>
            <person name="Masuho Y."/>
            <person name="Yamashita R."/>
            <person name="Nakai K."/>
            <person name="Yada T."/>
            <person name="Nakamura Y."/>
            <person name="Ohara O."/>
            <person name="Isogai T."/>
            <person name="Sugano S."/>
        </authorList>
    </citation>
    <scope>NUCLEOTIDE SEQUENCE [LARGE SCALE MRNA]</scope>
    <source>
        <tissue>Testis</tissue>
    </source>
</reference>
<reference key="2">
    <citation type="journal article" date="2003" name="Science">
        <title>Human chromosome 7: DNA sequence and biology.</title>
        <authorList>
            <person name="Scherer S.W."/>
            <person name="Cheung J."/>
            <person name="MacDonald J.R."/>
            <person name="Osborne L.R."/>
            <person name="Nakabayashi K."/>
            <person name="Herbrick J.-A."/>
            <person name="Carson A.R."/>
            <person name="Parker-Katiraee L."/>
            <person name="Skaug J."/>
            <person name="Khaja R."/>
            <person name="Zhang J."/>
            <person name="Hudek A.K."/>
            <person name="Li M."/>
            <person name="Haddad M."/>
            <person name="Duggan G.E."/>
            <person name="Fernandez B.A."/>
            <person name="Kanematsu E."/>
            <person name="Gentles S."/>
            <person name="Christopoulos C.C."/>
            <person name="Choufani S."/>
            <person name="Kwasnicka D."/>
            <person name="Zheng X.H."/>
            <person name="Lai Z."/>
            <person name="Nusskern D.R."/>
            <person name="Zhang Q."/>
            <person name="Gu Z."/>
            <person name="Lu F."/>
            <person name="Zeesman S."/>
            <person name="Nowaczyk M.J."/>
            <person name="Teshima I."/>
            <person name="Chitayat D."/>
            <person name="Shuman C."/>
            <person name="Weksberg R."/>
            <person name="Zackai E.H."/>
            <person name="Grebe T.A."/>
            <person name="Cox S.R."/>
            <person name="Kirkpatrick S.J."/>
            <person name="Rahman N."/>
            <person name="Friedman J.M."/>
            <person name="Heng H.H.Q."/>
            <person name="Pelicci P.G."/>
            <person name="Lo-Coco F."/>
            <person name="Belloni E."/>
            <person name="Shaffer L.G."/>
            <person name="Pober B."/>
            <person name="Morton C.C."/>
            <person name="Gusella J.F."/>
            <person name="Bruns G.A.P."/>
            <person name="Korf B.R."/>
            <person name="Quade B.J."/>
            <person name="Ligon A.H."/>
            <person name="Ferguson H."/>
            <person name="Higgins A.W."/>
            <person name="Leach N.T."/>
            <person name="Herrick S.R."/>
            <person name="Lemyre E."/>
            <person name="Farra C.G."/>
            <person name="Kim H.-G."/>
            <person name="Summers A.M."/>
            <person name="Gripp K.W."/>
            <person name="Roberts W."/>
            <person name="Szatmari P."/>
            <person name="Winsor E.J.T."/>
            <person name="Grzeschik K.-H."/>
            <person name="Teebi A."/>
            <person name="Minassian B.A."/>
            <person name="Kere J."/>
            <person name="Armengol L."/>
            <person name="Pujana M.A."/>
            <person name="Estivill X."/>
            <person name="Wilson M.D."/>
            <person name="Koop B.F."/>
            <person name="Tosi S."/>
            <person name="Moore G.E."/>
            <person name="Boright A.P."/>
            <person name="Zlotorynski E."/>
            <person name="Kerem B."/>
            <person name="Kroisel P.M."/>
            <person name="Petek E."/>
            <person name="Oscier D.G."/>
            <person name="Mould S.J."/>
            <person name="Doehner H."/>
            <person name="Doehner K."/>
            <person name="Rommens J.M."/>
            <person name="Vincent J.B."/>
            <person name="Venter J.C."/>
            <person name="Li P.W."/>
            <person name="Mural R.J."/>
            <person name="Adams M.D."/>
            <person name="Tsui L.-C."/>
        </authorList>
    </citation>
    <scope>NUCLEOTIDE SEQUENCE [LARGE SCALE GENOMIC DNA]</scope>
</reference>
<reference key="3">
    <citation type="submission" date="2005-07" db="EMBL/GenBank/DDBJ databases">
        <authorList>
            <person name="Mural R.J."/>
            <person name="Istrail S."/>
            <person name="Sutton G.G."/>
            <person name="Florea L."/>
            <person name="Halpern A.L."/>
            <person name="Mobarry C.M."/>
            <person name="Lippert R."/>
            <person name="Walenz B."/>
            <person name="Shatkay H."/>
            <person name="Dew I."/>
            <person name="Miller J.R."/>
            <person name="Flanigan M.J."/>
            <person name="Edwards N.J."/>
            <person name="Bolanos R."/>
            <person name="Fasulo D."/>
            <person name="Halldorsson B.V."/>
            <person name="Hannenhalli S."/>
            <person name="Turner R."/>
            <person name="Yooseph S."/>
            <person name="Lu F."/>
            <person name="Nusskern D.R."/>
            <person name="Shue B.C."/>
            <person name="Zheng X.H."/>
            <person name="Zhong F."/>
            <person name="Delcher A.L."/>
            <person name="Huson D.H."/>
            <person name="Kravitz S.A."/>
            <person name="Mouchard L."/>
            <person name="Reinert K."/>
            <person name="Remington K.A."/>
            <person name="Clark A.G."/>
            <person name="Waterman M.S."/>
            <person name="Eichler E.E."/>
            <person name="Adams M.D."/>
            <person name="Hunkapiller M.W."/>
            <person name="Myers E.W."/>
            <person name="Venter J.C."/>
        </authorList>
    </citation>
    <scope>NUCLEOTIDE SEQUENCE [LARGE SCALE GENOMIC DNA]</scope>
</reference>
<dbReference type="EMBL" id="AK097607">
    <property type="protein sequence ID" value="BAC05118.1"/>
    <property type="molecule type" value="mRNA"/>
</dbReference>
<dbReference type="EMBL" id="CH236950">
    <property type="protein sequence ID" value="EAL24075.1"/>
    <property type="molecule type" value="Genomic_DNA"/>
</dbReference>
<dbReference type="EMBL" id="CH471070">
    <property type="protein sequence ID" value="EAW83798.1"/>
    <property type="molecule type" value="Genomic_DNA"/>
</dbReference>
<dbReference type="iPTMnet" id="A4D1N5"/>
<dbReference type="PhosphoSitePlus" id="A4D1N5"/>
<dbReference type="BioMuta" id="-"/>
<dbReference type="neXtProt" id="NX_A4D1N5"/>
<dbReference type="InParanoid" id="A4D1N5"/>
<dbReference type="PAN-GO" id="A4D1N5">
    <property type="GO annotations" value="0 GO annotations based on evolutionary models"/>
</dbReference>
<dbReference type="PhylomeDB" id="A4D1N5"/>
<dbReference type="Pharos" id="A4D1N5">
    <property type="development level" value="Tdark"/>
</dbReference>
<dbReference type="Proteomes" id="UP000005640">
    <property type="component" value="Unplaced"/>
</dbReference>
<dbReference type="RNAct" id="A4D1N5">
    <property type="molecule type" value="protein"/>
</dbReference>
<organism>
    <name type="scientific">Homo sapiens</name>
    <name type="common">Human</name>
    <dbReference type="NCBI Taxonomy" id="9606"/>
    <lineage>
        <taxon>Eukaryota</taxon>
        <taxon>Metazoa</taxon>
        <taxon>Chordata</taxon>
        <taxon>Craniata</taxon>
        <taxon>Vertebrata</taxon>
        <taxon>Euteleostomi</taxon>
        <taxon>Mammalia</taxon>
        <taxon>Eutheria</taxon>
        <taxon>Euarchontoglires</taxon>
        <taxon>Primates</taxon>
        <taxon>Haplorrhini</taxon>
        <taxon>Catarrhini</taxon>
        <taxon>Hominidae</taxon>
        <taxon>Homo</taxon>
    </lineage>
</organism>
<proteinExistence type="evidence at transcript level"/>
<protein>
    <recommendedName>
        <fullName>Putative uncharacterized protein FLJ40288</fullName>
    </recommendedName>
</protein>